<name>LIPH_MOUSE</name>
<sequence>MLRLCFFISFMCLVKSDTDETCPSFTRLSFHSAVVGTGLSVRLMLYTQRDQTCAQIINSTALGSLNVTKKTTFIIHGFRPTGSPPVWIEELVQSLISVQEMNVVVVDWNRGATTVIYPHASSKTRQVASILKEFIDQMLVKGASLDNIYMIGVSLGAHIAGFVGESYEGKLGRVTGLDPAGPLFNGRPPEERLDPSDALFVDVIHSDTDALGYKEALGHIDFYPNGGLDQPGCPKTIFGGIKYFKCDHQMSVYLYLASLQNNCSITAYPCDSYRDYRNGKCVSCGAGQIVPCPRVGYYADSWKEYLWDRDPPMTKAFFDTAETKPYCMYHYFVDIVSWNKSVRRGFITIKLRGEDGNITESKIDHEPSAFEKYHQVSLLARFNRDLDKVAEISLLFSTGSVVGPKYKLRVLQMKLRSLAHPDRPHLCRYDLVLMENVETSFQPILCSQQQM</sequence>
<dbReference type="EC" id="3.1.1.-"/>
<dbReference type="EMBL" id="AY093499">
    <property type="protein sequence ID" value="AAM18804.1"/>
    <property type="molecule type" value="mRNA"/>
</dbReference>
<dbReference type="EMBL" id="AK048150">
    <property type="protein sequence ID" value="BAC33259.1"/>
    <property type="molecule type" value="mRNA"/>
</dbReference>
<dbReference type="EMBL" id="AK134352">
    <property type="protein sequence ID" value="BAE22108.1"/>
    <property type="molecule type" value="mRNA"/>
</dbReference>
<dbReference type="EMBL" id="AK136503">
    <property type="protein sequence ID" value="BAE23014.1"/>
    <property type="molecule type" value="mRNA"/>
</dbReference>
<dbReference type="EMBL" id="AK161067">
    <property type="protein sequence ID" value="BAE36182.1"/>
    <property type="molecule type" value="mRNA"/>
</dbReference>
<dbReference type="EMBL" id="AK162492">
    <property type="protein sequence ID" value="BAE36944.1"/>
    <property type="molecule type" value="mRNA"/>
</dbReference>
<dbReference type="EMBL" id="BC037489">
    <property type="protein sequence ID" value="AAH37489.1"/>
    <property type="molecule type" value="mRNA"/>
</dbReference>
<dbReference type="CCDS" id="CCDS37295.1">
    <molecule id="Q8CIV3-3"/>
</dbReference>
<dbReference type="CCDS" id="CCDS37296.1">
    <molecule id="Q8CIV3-1"/>
</dbReference>
<dbReference type="CCDS" id="CCDS88903.1">
    <molecule id="Q8CIV3-2"/>
</dbReference>
<dbReference type="RefSeq" id="NP_001077363.1">
    <molecule id="Q8CIV3-1"/>
    <property type="nucleotide sequence ID" value="NM_001083894.1"/>
</dbReference>
<dbReference type="RefSeq" id="NP_001276511.1">
    <molecule id="Q8CIV3-2"/>
    <property type="nucleotide sequence ID" value="NM_001289582.1"/>
</dbReference>
<dbReference type="RefSeq" id="NP_700453.1">
    <molecule id="Q8CIV3-3"/>
    <property type="nucleotide sequence ID" value="NM_153404.3"/>
</dbReference>
<dbReference type="SMR" id="Q8CIV3"/>
<dbReference type="FunCoup" id="Q8CIV3">
    <property type="interactions" value="335"/>
</dbReference>
<dbReference type="STRING" id="10090.ENSMUSP00000062310"/>
<dbReference type="ESTHER" id="mouse-LIPH">
    <property type="family name" value="Phospholipase"/>
</dbReference>
<dbReference type="GlyCosmos" id="Q8CIV3">
    <property type="glycosylation" value="1 site, No reported glycans"/>
</dbReference>
<dbReference type="GlyGen" id="Q8CIV3">
    <property type="glycosylation" value="1 site"/>
</dbReference>
<dbReference type="PhosphoSitePlus" id="Q8CIV3"/>
<dbReference type="PaxDb" id="10090-ENSMUSP00000062310"/>
<dbReference type="ProteomicsDB" id="290031">
    <molecule id="Q8CIV3-1"/>
</dbReference>
<dbReference type="ProteomicsDB" id="290032">
    <molecule id="Q8CIV3-2"/>
</dbReference>
<dbReference type="ProteomicsDB" id="290033">
    <molecule id="Q8CIV3-3"/>
</dbReference>
<dbReference type="Antibodypedia" id="33838">
    <property type="antibodies" value="89 antibodies from 23 providers"/>
</dbReference>
<dbReference type="Ensembl" id="ENSMUST00000060673.8">
    <molecule id="Q8CIV3-1"/>
    <property type="protein sequence ID" value="ENSMUSP00000062310.7"/>
    <property type="gene ID" value="ENSMUSG00000044626.14"/>
</dbReference>
<dbReference type="Ensembl" id="ENSMUST00000074230.12">
    <molecule id="Q8CIV3-3"/>
    <property type="protein sequence ID" value="ENSMUSP00000073853.5"/>
    <property type="gene ID" value="ENSMUSG00000044626.14"/>
</dbReference>
<dbReference type="Ensembl" id="ENSMUST00000231766.2">
    <molecule id="Q8CIV3-2"/>
    <property type="protein sequence ID" value="ENSMUSP00000156378.2"/>
    <property type="gene ID" value="ENSMUSG00000044626.14"/>
</dbReference>
<dbReference type="GeneID" id="239759"/>
<dbReference type="KEGG" id="mmu:239759"/>
<dbReference type="UCSC" id="uc007yru.1">
    <molecule id="Q8CIV3-1"/>
    <property type="organism name" value="mouse"/>
</dbReference>
<dbReference type="UCSC" id="uc007yrv.1">
    <molecule id="Q8CIV3-3"/>
    <property type="organism name" value="mouse"/>
</dbReference>
<dbReference type="UCSC" id="uc012adk.1">
    <molecule id="Q8CIV3-2"/>
    <property type="organism name" value="mouse"/>
</dbReference>
<dbReference type="AGR" id="MGI:2388029"/>
<dbReference type="CTD" id="200879"/>
<dbReference type="MGI" id="MGI:2388029">
    <property type="gene designation" value="Liph"/>
</dbReference>
<dbReference type="VEuPathDB" id="HostDB:ENSMUSG00000044626"/>
<dbReference type="eggNOG" id="ENOG502QUQT">
    <property type="taxonomic scope" value="Eukaryota"/>
</dbReference>
<dbReference type="GeneTree" id="ENSGT00940000156285"/>
<dbReference type="HOGENOM" id="CLU_027171_3_0_1"/>
<dbReference type="InParanoid" id="Q8CIV3"/>
<dbReference type="OMA" id="DALHTDM"/>
<dbReference type="OrthoDB" id="199913at2759"/>
<dbReference type="PhylomeDB" id="Q8CIV3"/>
<dbReference type="TreeFam" id="TF324997"/>
<dbReference type="Reactome" id="R-MMU-1483166">
    <property type="pathway name" value="Synthesis of PA"/>
</dbReference>
<dbReference type="BioGRID-ORCS" id="239759">
    <property type="hits" value="3 hits in 81 CRISPR screens"/>
</dbReference>
<dbReference type="ChiTaRS" id="Liph">
    <property type="organism name" value="mouse"/>
</dbReference>
<dbReference type="PRO" id="PR:Q8CIV3"/>
<dbReference type="Proteomes" id="UP000000589">
    <property type="component" value="Chromosome 16"/>
</dbReference>
<dbReference type="RNAct" id="Q8CIV3">
    <property type="molecule type" value="protein"/>
</dbReference>
<dbReference type="Bgee" id="ENSMUSG00000044626">
    <property type="expression patterns" value="Expressed in epithelium of stomach and 100 other cell types or tissues"/>
</dbReference>
<dbReference type="ExpressionAtlas" id="Q8CIV3">
    <property type="expression patterns" value="baseline and differential"/>
</dbReference>
<dbReference type="GO" id="GO:0005576">
    <property type="term" value="C:extracellular region"/>
    <property type="evidence" value="ECO:0000266"/>
    <property type="project" value="MGI"/>
</dbReference>
<dbReference type="GO" id="GO:0005615">
    <property type="term" value="C:extracellular space"/>
    <property type="evidence" value="ECO:0007669"/>
    <property type="project" value="Ensembl"/>
</dbReference>
<dbReference type="GO" id="GO:0005886">
    <property type="term" value="C:plasma membrane"/>
    <property type="evidence" value="ECO:0007669"/>
    <property type="project" value="UniProtKB-SubCell"/>
</dbReference>
<dbReference type="GO" id="GO:0052689">
    <property type="term" value="F:carboxylic ester hydrolase activity"/>
    <property type="evidence" value="ECO:0007669"/>
    <property type="project" value="InterPro"/>
</dbReference>
<dbReference type="GO" id="GO:0008201">
    <property type="term" value="F:heparin binding"/>
    <property type="evidence" value="ECO:0007669"/>
    <property type="project" value="Ensembl"/>
</dbReference>
<dbReference type="GO" id="GO:0004620">
    <property type="term" value="F:phospholipase activity"/>
    <property type="evidence" value="ECO:0007669"/>
    <property type="project" value="Ensembl"/>
</dbReference>
<dbReference type="GO" id="GO:0016042">
    <property type="term" value="P:lipid catabolic process"/>
    <property type="evidence" value="ECO:0007669"/>
    <property type="project" value="UniProtKB-KW"/>
</dbReference>
<dbReference type="CDD" id="cd00707">
    <property type="entry name" value="Pancreat_lipase_like"/>
    <property type="match status" value="1"/>
</dbReference>
<dbReference type="FunFam" id="3.40.50.1820:FF:000063">
    <property type="entry name" value="Lipase member H"/>
    <property type="match status" value="1"/>
</dbReference>
<dbReference type="Gene3D" id="3.40.50.1820">
    <property type="entry name" value="alpha/beta hydrolase"/>
    <property type="match status" value="1"/>
</dbReference>
<dbReference type="InterPro" id="IPR029058">
    <property type="entry name" value="AB_hydrolase_fold"/>
</dbReference>
<dbReference type="InterPro" id="IPR013818">
    <property type="entry name" value="Lipase"/>
</dbReference>
<dbReference type="InterPro" id="IPR016272">
    <property type="entry name" value="Lipase_LIPH"/>
</dbReference>
<dbReference type="InterPro" id="IPR033906">
    <property type="entry name" value="Lipase_N"/>
</dbReference>
<dbReference type="InterPro" id="IPR000734">
    <property type="entry name" value="TAG_lipase"/>
</dbReference>
<dbReference type="PANTHER" id="PTHR11610">
    <property type="entry name" value="LIPASE"/>
    <property type="match status" value="1"/>
</dbReference>
<dbReference type="PANTHER" id="PTHR11610:SF12">
    <property type="entry name" value="LIPASE MEMBER H"/>
    <property type="match status" value="1"/>
</dbReference>
<dbReference type="Pfam" id="PF00151">
    <property type="entry name" value="Lipase"/>
    <property type="match status" value="1"/>
</dbReference>
<dbReference type="PIRSF" id="PIRSF000865">
    <property type="entry name" value="Lipoprotein_lipase_LIPH"/>
    <property type="match status" value="1"/>
</dbReference>
<dbReference type="PRINTS" id="PR00821">
    <property type="entry name" value="TAGLIPASE"/>
</dbReference>
<dbReference type="SUPFAM" id="SSF53474">
    <property type="entry name" value="alpha/beta-Hydrolases"/>
    <property type="match status" value="1"/>
</dbReference>
<organism>
    <name type="scientific">Mus musculus</name>
    <name type="common">Mouse</name>
    <dbReference type="NCBI Taxonomy" id="10090"/>
    <lineage>
        <taxon>Eukaryota</taxon>
        <taxon>Metazoa</taxon>
        <taxon>Chordata</taxon>
        <taxon>Craniata</taxon>
        <taxon>Vertebrata</taxon>
        <taxon>Euteleostomi</taxon>
        <taxon>Mammalia</taxon>
        <taxon>Eutheria</taxon>
        <taxon>Euarchontoglires</taxon>
        <taxon>Glires</taxon>
        <taxon>Rodentia</taxon>
        <taxon>Myomorpha</taxon>
        <taxon>Muroidea</taxon>
        <taxon>Muridae</taxon>
        <taxon>Murinae</taxon>
        <taxon>Mus</taxon>
        <taxon>Mus</taxon>
    </lineage>
</organism>
<protein>
    <recommendedName>
        <fullName>Lipase member H</fullName>
        <ecNumber>3.1.1.-</ecNumber>
    </recommendedName>
</protein>
<gene>
    <name type="primary">Liph</name>
</gene>
<comment type="function">
    <text evidence="2">Hydrolyzes specifically phosphatidic acid (PA) to produce 2-acyl lysophosphatidic acid (LPA; a potent bioactive lipid mediator) and fatty acid (By similarity). Does not hydrolyze other phospholipids, like phosphatidylserine (PS), phosphatidylcholine (PC) and phosphatidylethanolamine (PE) or triacylglycerol (TG) (By similarity).</text>
</comment>
<comment type="catalytic activity">
    <reaction evidence="2">
        <text>1-hexadecanoyl-2-(9Z-octadecenoyl)-sn-glycero-3-phosphate + H2O = 2-(9Z-octadecenoyl)-sn-glycero-3-phosphate + hexadecanoate + H(+)</text>
        <dbReference type="Rhea" id="RHEA:40943"/>
        <dbReference type="ChEBI" id="CHEBI:7896"/>
        <dbReference type="ChEBI" id="CHEBI:15377"/>
        <dbReference type="ChEBI" id="CHEBI:15378"/>
        <dbReference type="ChEBI" id="CHEBI:64839"/>
        <dbReference type="ChEBI" id="CHEBI:77593"/>
    </reaction>
    <physiologicalReaction direction="left-to-right" evidence="2">
        <dbReference type="Rhea" id="RHEA:40944"/>
    </physiologicalReaction>
</comment>
<comment type="subunit">
    <text evidence="2">Interacts with TTMP/C3orf52.</text>
</comment>
<comment type="subcellular location">
    <subcellularLocation>
        <location evidence="2">Secreted</location>
    </subcellularLocation>
    <subcellularLocation>
        <location evidence="2">Cell membrane</location>
        <topology>Peripheral membrane protein</topology>
    </subcellularLocation>
</comment>
<comment type="alternative products">
    <event type="alternative splicing"/>
    <isoform>
        <id>Q8CIV3-1</id>
        <name>1</name>
        <sequence type="displayed"/>
    </isoform>
    <isoform>
        <id>Q8CIV3-2</id>
        <name>2</name>
        <sequence type="described" ref="VSP_022506"/>
    </isoform>
    <isoform>
        <id>Q8CIV3-3</id>
        <name>3</name>
        <sequence type="described" ref="VSP_022505"/>
    </isoform>
</comment>
<comment type="tissue specificity">
    <text evidence="4">Expressed in placenta and colon. Weakly expressed in small intestine.</text>
</comment>
<comment type="similarity">
    <text evidence="7">Belongs to the AB hydrolase superfamily. Lipase family.</text>
</comment>
<reference key="1">
    <citation type="journal article" date="2002" name="Genomics">
        <title>Lipase h, a new member of the triglyceride lipase family synthesized by the intestine.</title>
        <authorList>
            <person name="Jin W."/>
            <person name="Broedl U."/>
            <person name="Monajemi H."/>
            <person name="Glick J."/>
            <person name="Rader D."/>
        </authorList>
    </citation>
    <scope>NUCLEOTIDE SEQUENCE [MRNA] (ISOFORM 1)</scope>
    <scope>TISSUE SPECIFICITY</scope>
    <source>
        <strain>CD-1</strain>
    </source>
</reference>
<reference key="2">
    <citation type="journal article" date="2005" name="Science">
        <title>The transcriptional landscape of the mammalian genome.</title>
        <authorList>
            <person name="Carninci P."/>
            <person name="Kasukawa T."/>
            <person name="Katayama S."/>
            <person name="Gough J."/>
            <person name="Frith M.C."/>
            <person name="Maeda N."/>
            <person name="Oyama R."/>
            <person name="Ravasi T."/>
            <person name="Lenhard B."/>
            <person name="Wells C."/>
            <person name="Kodzius R."/>
            <person name="Shimokawa K."/>
            <person name="Bajic V.B."/>
            <person name="Brenner S.E."/>
            <person name="Batalov S."/>
            <person name="Forrest A.R."/>
            <person name="Zavolan M."/>
            <person name="Davis M.J."/>
            <person name="Wilming L.G."/>
            <person name="Aidinis V."/>
            <person name="Allen J.E."/>
            <person name="Ambesi-Impiombato A."/>
            <person name="Apweiler R."/>
            <person name="Aturaliya R.N."/>
            <person name="Bailey T.L."/>
            <person name="Bansal M."/>
            <person name="Baxter L."/>
            <person name="Beisel K.W."/>
            <person name="Bersano T."/>
            <person name="Bono H."/>
            <person name="Chalk A.M."/>
            <person name="Chiu K.P."/>
            <person name="Choudhary V."/>
            <person name="Christoffels A."/>
            <person name="Clutterbuck D.R."/>
            <person name="Crowe M.L."/>
            <person name="Dalla E."/>
            <person name="Dalrymple B.P."/>
            <person name="de Bono B."/>
            <person name="Della Gatta G."/>
            <person name="di Bernardo D."/>
            <person name="Down T."/>
            <person name="Engstrom P."/>
            <person name="Fagiolini M."/>
            <person name="Faulkner G."/>
            <person name="Fletcher C.F."/>
            <person name="Fukushima T."/>
            <person name="Furuno M."/>
            <person name="Futaki S."/>
            <person name="Gariboldi M."/>
            <person name="Georgii-Hemming P."/>
            <person name="Gingeras T.R."/>
            <person name="Gojobori T."/>
            <person name="Green R.E."/>
            <person name="Gustincich S."/>
            <person name="Harbers M."/>
            <person name="Hayashi Y."/>
            <person name="Hensch T.K."/>
            <person name="Hirokawa N."/>
            <person name="Hill D."/>
            <person name="Huminiecki L."/>
            <person name="Iacono M."/>
            <person name="Ikeo K."/>
            <person name="Iwama A."/>
            <person name="Ishikawa T."/>
            <person name="Jakt M."/>
            <person name="Kanapin A."/>
            <person name="Katoh M."/>
            <person name="Kawasawa Y."/>
            <person name="Kelso J."/>
            <person name="Kitamura H."/>
            <person name="Kitano H."/>
            <person name="Kollias G."/>
            <person name="Krishnan S.P."/>
            <person name="Kruger A."/>
            <person name="Kummerfeld S.K."/>
            <person name="Kurochkin I.V."/>
            <person name="Lareau L.F."/>
            <person name="Lazarevic D."/>
            <person name="Lipovich L."/>
            <person name="Liu J."/>
            <person name="Liuni S."/>
            <person name="McWilliam S."/>
            <person name="Madan Babu M."/>
            <person name="Madera M."/>
            <person name="Marchionni L."/>
            <person name="Matsuda H."/>
            <person name="Matsuzawa S."/>
            <person name="Miki H."/>
            <person name="Mignone F."/>
            <person name="Miyake S."/>
            <person name="Morris K."/>
            <person name="Mottagui-Tabar S."/>
            <person name="Mulder N."/>
            <person name="Nakano N."/>
            <person name="Nakauchi H."/>
            <person name="Ng P."/>
            <person name="Nilsson R."/>
            <person name="Nishiguchi S."/>
            <person name="Nishikawa S."/>
            <person name="Nori F."/>
            <person name="Ohara O."/>
            <person name="Okazaki Y."/>
            <person name="Orlando V."/>
            <person name="Pang K.C."/>
            <person name="Pavan W.J."/>
            <person name="Pavesi G."/>
            <person name="Pesole G."/>
            <person name="Petrovsky N."/>
            <person name="Piazza S."/>
            <person name="Reed J."/>
            <person name="Reid J.F."/>
            <person name="Ring B.Z."/>
            <person name="Ringwald M."/>
            <person name="Rost B."/>
            <person name="Ruan Y."/>
            <person name="Salzberg S.L."/>
            <person name="Sandelin A."/>
            <person name="Schneider C."/>
            <person name="Schoenbach C."/>
            <person name="Sekiguchi K."/>
            <person name="Semple C.A."/>
            <person name="Seno S."/>
            <person name="Sessa L."/>
            <person name="Sheng Y."/>
            <person name="Shibata Y."/>
            <person name="Shimada H."/>
            <person name="Shimada K."/>
            <person name="Silva D."/>
            <person name="Sinclair B."/>
            <person name="Sperling S."/>
            <person name="Stupka E."/>
            <person name="Sugiura K."/>
            <person name="Sultana R."/>
            <person name="Takenaka Y."/>
            <person name="Taki K."/>
            <person name="Tammoja K."/>
            <person name="Tan S.L."/>
            <person name="Tang S."/>
            <person name="Taylor M.S."/>
            <person name="Tegner J."/>
            <person name="Teichmann S.A."/>
            <person name="Ueda H.R."/>
            <person name="van Nimwegen E."/>
            <person name="Verardo R."/>
            <person name="Wei C.L."/>
            <person name="Yagi K."/>
            <person name="Yamanishi H."/>
            <person name="Zabarovsky E."/>
            <person name="Zhu S."/>
            <person name="Zimmer A."/>
            <person name="Hide W."/>
            <person name="Bult C."/>
            <person name="Grimmond S.M."/>
            <person name="Teasdale R.D."/>
            <person name="Liu E.T."/>
            <person name="Brusic V."/>
            <person name="Quackenbush J."/>
            <person name="Wahlestedt C."/>
            <person name="Mattick J.S."/>
            <person name="Hume D.A."/>
            <person name="Kai C."/>
            <person name="Sasaki D."/>
            <person name="Tomaru Y."/>
            <person name="Fukuda S."/>
            <person name="Kanamori-Katayama M."/>
            <person name="Suzuki M."/>
            <person name="Aoki J."/>
            <person name="Arakawa T."/>
            <person name="Iida J."/>
            <person name="Imamura K."/>
            <person name="Itoh M."/>
            <person name="Kato T."/>
            <person name="Kawaji H."/>
            <person name="Kawagashira N."/>
            <person name="Kawashima T."/>
            <person name="Kojima M."/>
            <person name="Kondo S."/>
            <person name="Konno H."/>
            <person name="Nakano K."/>
            <person name="Ninomiya N."/>
            <person name="Nishio T."/>
            <person name="Okada M."/>
            <person name="Plessy C."/>
            <person name="Shibata K."/>
            <person name="Shiraki T."/>
            <person name="Suzuki S."/>
            <person name="Tagami M."/>
            <person name="Waki K."/>
            <person name="Watahiki A."/>
            <person name="Okamura-Oho Y."/>
            <person name="Suzuki H."/>
            <person name="Kawai J."/>
            <person name="Hayashizaki Y."/>
        </authorList>
    </citation>
    <scope>NUCLEOTIDE SEQUENCE [LARGE SCALE MRNA] (ISOFORMS 1 AND 2)</scope>
    <source>
        <strain>C57BL/6J</strain>
        <tissue>Cecum</tissue>
        <tissue>Head</tissue>
        <tissue>Testis</tissue>
        <tissue>Urinary bladder</tissue>
    </source>
</reference>
<reference key="3">
    <citation type="journal article" date="2004" name="Genome Res.">
        <title>The status, quality, and expansion of the NIH full-length cDNA project: the Mammalian Gene Collection (MGC).</title>
        <authorList>
            <consortium name="The MGC Project Team"/>
        </authorList>
    </citation>
    <scope>NUCLEOTIDE SEQUENCE [LARGE SCALE MRNA] (ISOFORM 3)</scope>
    <source>
        <strain>FVB/N</strain>
        <tissue>Mammary tumor</tissue>
    </source>
</reference>
<keyword id="KW-0025">Alternative splicing</keyword>
<keyword id="KW-1003">Cell membrane</keyword>
<keyword id="KW-1015">Disulfide bond</keyword>
<keyword id="KW-0325">Glycoprotein</keyword>
<keyword id="KW-0378">Hydrolase</keyword>
<keyword id="KW-0442">Lipid degradation</keyword>
<keyword id="KW-0443">Lipid metabolism</keyword>
<keyword id="KW-0472">Membrane</keyword>
<keyword id="KW-1185">Reference proteome</keyword>
<keyword id="KW-0964">Secreted</keyword>
<keyword id="KW-0732">Signal</keyword>
<evidence type="ECO:0000250" key="1"/>
<evidence type="ECO:0000250" key="2">
    <source>
        <dbReference type="UniProtKB" id="Q8WWY8"/>
    </source>
</evidence>
<evidence type="ECO:0000255" key="3"/>
<evidence type="ECO:0000269" key="4">
    <source>
    </source>
</evidence>
<evidence type="ECO:0000303" key="5">
    <source>
    </source>
</evidence>
<evidence type="ECO:0000303" key="6">
    <source>
    </source>
</evidence>
<evidence type="ECO:0000305" key="7"/>
<feature type="signal peptide" evidence="3">
    <location>
        <begin position="1"/>
        <end position="16"/>
    </location>
</feature>
<feature type="chain" id="PRO_0000273322" description="Lipase member H">
    <location>
        <begin position="17"/>
        <end position="451"/>
    </location>
</feature>
<feature type="active site" description="Nucleophile" evidence="1">
    <location>
        <position position="154"/>
    </location>
</feature>
<feature type="active site" description="Charge relay system" evidence="1">
    <location>
        <position position="178"/>
    </location>
</feature>
<feature type="active site" description="Charge relay system" evidence="1">
    <location>
        <position position="248"/>
    </location>
</feature>
<feature type="glycosylation site" description="N-linked (GlcNAc...) asparagine" evidence="3">
    <location>
        <position position="66"/>
    </location>
</feature>
<feature type="disulfide bond" evidence="1">
    <location>
        <begin position="233"/>
        <end position="246"/>
    </location>
</feature>
<feature type="disulfide bond" evidence="1">
    <location>
        <begin position="270"/>
        <end position="281"/>
    </location>
</feature>
<feature type="disulfide bond" evidence="1">
    <location>
        <begin position="284"/>
        <end position="292"/>
    </location>
</feature>
<feature type="disulfide bond" evidence="1">
    <location>
        <begin position="427"/>
        <end position="446"/>
    </location>
</feature>
<feature type="splice variant" id="VSP_022505" description="In isoform 3." evidence="5">
    <location>
        <begin position="210"/>
        <end position="239"/>
    </location>
</feature>
<feature type="splice variant" id="VSP_022506" description="In isoform 2." evidence="6">
    <location>
        <begin position="210"/>
        <end position="211"/>
    </location>
</feature>
<feature type="sequence conflict" description="In Ref. 2; BAE36182." evidence="7" ref="2">
    <original>S</original>
    <variation>N</variation>
    <location>
        <position position="29"/>
    </location>
</feature>
<feature type="sequence conflict" description="In Ref. 2; BAE23014." evidence="7" ref="2">
    <original>D</original>
    <variation>N</variation>
    <location>
        <position position="146"/>
    </location>
</feature>
<feature type="sequence conflict" description="In Ref. 2; BAE36182." evidence="7" ref="2">
    <original>S</original>
    <variation>Y</variation>
    <location>
        <position position="251"/>
    </location>
</feature>
<feature type="sequence conflict" description="In Ref. 1; AAM18804." evidence="7" ref="1">
    <original>L</original>
    <variation>M</variation>
    <location>
        <position position="395"/>
    </location>
</feature>
<proteinExistence type="evidence at transcript level"/>
<accession>Q8CIV3</accession>
<accession>Q3TRT3</accession>
<accession>Q3TTZ0</accession>
<accession>Q3UWA2</accession>
<accession>Q8BXB5</accession>
<accession>Q8CI45</accession>